<comment type="subcellular location">
    <subcellularLocation>
        <location evidence="2">Membrane</location>
        <topology evidence="2">Multi-pass membrane protein</topology>
    </subcellularLocation>
</comment>
<comment type="similarity">
    <text evidence="2">Belongs to the TMEM205 family.</text>
</comment>
<accession>Q28GF8</accession>
<keyword id="KW-0472">Membrane</keyword>
<keyword id="KW-1185">Reference proteome</keyword>
<keyword id="KW-0812">Transmembrane</keyword>
<keyword id="KW-1133">Transmembrane helix</keyword>
<protein>
    <recommendedName>
        <fullName>Transmembrane protein 205</fullName>
    </recommendedName>
</protein>
<feature type="chain" id="PRO_0000317506" description="Transmembrane protein 205">
    <location>
        <begin position="1"/>
        <end position="188"/>
    </location>
</feature>
<feature type="transmembrane region" description="Helical" evidence="1">
    <location>
        <begin position="18"/>
        <end position="38"/>
    </location>
</feature>
<feature type="transmembrane region" description="Helical" evidence="1">
    <location>
        <begin position="53"/>
        <end position="73"/>
    </location>
</feature>
<feature type="transmembrane region" description="Helical" evidence="1">
    <location>
        <begin position="89"/>
        <end position="109"/>
    </location>
</feature>
<feature type="transmembrane region" description="Helical" evidence="1">
    <location>
        <begin position="168"/>
        <end position="188"/>
    </location>
</feature>
<name>TM205_XENTR</name>
<sequence length="188" mass="21266">MVAEGDPGNLVRTIHLLVLSASWGMQCWTTFVAGFVLIRGVPRHTFGLVQSKLFPFYNHIVLCCSFISLAIYAAYHPRELLSPSESVQITLFFVCLLAAALHARWFSPVTTKTMFKMHIIEREHSLGQGVGLSANREAYQRLQEKDPKYKALRQRFMRYHGISSLCNLLCLLCNGANLVYMALLMPTL</sequence>
<reference key="1">
    <citation type="submission" date="2006-10" db="EMBL/GenBank/DDBJ databases">
        <authorList>
            <consortium name="Sanger Xenopus tropicalis EST/cDNA project"/>
        </authorList>
    </citation>
    <scope>NUCLEOTIDE SEQUENCE [LARGE SCALE MRNA]</scope>
    <source>
        <tissue>Egg</tissue>
    </source>
</reference>
<reference key="2">
    <citation type="submission" date="2007-03" db="EMBL/GenBank/DDBJ databases">
        <authorList>
            <consortium name="NIH - Xenopus Gene Collection (XGC) project"/>
        </authorList>
    </citation>
    <scope>NUCLEOTIDE SEQUENCE [LARGE SCALE MRNA]</scope>
    <source>
        <tissue>Brain</tissue>
    </source>
</reference>
<gene>
    <name type="primary">tmem205</name>
    <name type="ORF">TEgg066b10.1</name>
</gene>
<evidence type="ECO:0000255" key="1"/>
<evidence type="ECO:0000305" key="2"/>
<organism>
    <name type="scientific">Xenopus tropicalis</name>
    <name type="common">Western clawed frog</name>
    <name type="synonym">Silurana tropicalis</name>
    <dbReference type="NCBI Taxonomy" id="8364"/>
    <lineage>
        <taxon>Eukaryota</taxon>
        <taxon>Metazoa</taxon>
        <taxon>Chordata</taxon>
        <taxon>Craniata</taxon>
        <taxon>Vertebrata</taxon>
        <taxon>Euteleostomi</taxon>
        <taxon>Amphibia</taxon>
        <taxon>Batrachia</taxon>
        <taxon>Anura</taxon>
        <taxon>Pipoidea</taxon>
        <taxon>Pipidae</taxon>
        <taxon>Xenopodinae</taxon>
        <taxon>Xenopus</taxon>
        <taxon>Silurana</taxon>
    </lineage>
</organism>
<dbReference type="EMBL" id="CR761405">
    <property type="protein sequence ID" value="CAJ82299.1"/>
    <property type="molecule type" value="mRNA"/>
</dbReference>
<dbReference type="EMBL" id="BC136112">
    <property type="protein sequence ID" value="AAI36113.1"/>
    <property type="molecule type" value="mRNA"/>
</dbReference>
<dbReference type="RefSeq" id="NP_001037942.1">
    <property type="nucleotide sequence ID" value="NM_001044477.2"/>
</dbReference>
<dbReference type="RefSeq" id="XP_012808623.1">
    <property type="nucleotide sequence ID" value="XM_012953169.3"/>
</dbReference>
<dbReference type="RefSeq" id="XP_012808624.1">
    <property type="nucleotide sequence ID" value="XM_012953170.3"/>
</dbReference>
<dbReference type="RefSeq" id="XP_012808625.1">
    <property type="nucleotide sequence ID" value="XM_012953171.3"/>
</dbReference>
<dbReference type="SMR" id="Q28GF8"/>
<dbReference type="FunCoup" id="Q28GF8">
    <property type="interactions" value="149"/>
</dbReference>
<dbReference type="STRING" id="8364.ENSXETP00000042587"/>
<dbReference type="PaxDb" id="8364-ENSXETP00000017377"/>
<dbReference type="DNASU" id="733568"/>
<dbReference type="GeneID" id="733568"/>
<dbReference type="KEGG" id="xtr:733568"/>
<dbReference type="AGR" id="Xenbase:XB-GENE-5820509"/>
<dbReference type="CTD" id="374882"/>
<dbReference type="Xenbase" id="XB-GENE-5820509">
    <property type="gene designation" value="tmem205"/>
</dbReference>
<dbReference type="eggNOG" id="KOG2886">
    <property type="taxonomic scope" value="Eukaryota"/>
</dbReference>
<dbReference type="HOGENOM" id="CLU_094297_1_1_1"/>
<dbReference type="InParanoid" id="Q28GF8"/>
<dbReference type="OMA" id="FQMRAVE"/>
<dbReference type="OrthoDB" id="1641132at2759"/>
<dbReference type="PhylomeDB" id="Q28GF8"/>
<dbReference type="TreeFam" id="TF323838"/>
<dbReference type="Proteomes" id="UP000008143">
    <property type="component" value="Chromosome 3"/>
</dbReference>
<dbReference type="Bgee" id="ENSXETG00000007927">
    <property type="expression patterns" value="Expressed in 2-cell stage embryo and 13 other cell types or tissues"/>
</dbReference>
<dbReference type="GO" id="GO:0016020">
    <property type="term" value="C:membrane"/>
    <property type="evidence" value="ECO:0007669"/>
    <property type="project" value="UniProtKB-SubCell"/>
</dbReference>
<dbReference type="InterPro" id="IPR042623">
    <property type="entry name" value="TMEM205"/>
</dbReference>
<dbReference type="InterPro" id="IPR025423">
    <property type="entry name" value="TMEM205-like"/>
</dbReference>
<dbReference type="PANTHER" id="PTHR46916">
    <property type="entry name" value="TRANSMEMBRANE PROTEIN 205"/>
    <property type="match status" value="1"/>
</dbReference>
<dbReference type="PANTHER" id="PTHR46916:SF2">
    <property type="entry name" value="TRANSMEMBRANE PROTEIN 205"/>
    <property type="match status" value="1"/>
</dbReference>
<dbReference type="Pfam" id="PF13664">
    <property type="entry name" value="DUF4149"/>
    <property type="match status" value="1"/>
</dbReference>
<proteinExistence type="evidence at transcript level"/>